<organism>
    <name type="scientific">Micrococcus luteus</name>
    <name type="common">Micrococcus lysodeikticus</name>
    <dbReference type="NCBI Taxonomy" id="1270"/>
    <lineage>
        <taxon>Bacteria</taxon>
        <taxon>Bacillati</taxon>
        <taxon>Actinomycetota</taxon>
        <taxon>Actinomycetes</taxon>
        <taxon>Micrococcales</taxon>
        <taxon>Micrococcaceae</taxon>
        <taxon>Micrococcus</taxon>
    </lineage>
</organism>
<proteinExistence type="inferred from homology"/>
<sequence length="132" mass="14408">MLPRDRRVRTPAEFRHLGRTGTRAGRRTVVVSVATDPDQTRSTSPSAPRPRAGFVVSKAVGNAVTRNRVKRRLRAVVAEQMRLPPLRDLPVLVQVRALPAAAEADYALLRRETVGALGKALKPHLPAASEHA</sequence>
<evidence type="ECO:0000255" key="1">
    <source>
        <dbReference type="HAMAP-Rule" id="MF_00227"/>
    </source>
</evidence>
<keyword id="KW-0255">Endonuclease</keyword>
<keyword id="KW-0378">Hydrolase</keyword>
<keyword id="KW-0540">Nuclease</keyword>
<keyword id="KW-0694">RNA-binding</keyword>
<keyword id="KW-0819">tRNA processing</keyword>
<feature type="chain" id="PRO_0000198484" description="Ribonuclease P protein component">
    <location>
        <begin position="1"/>
        <end position="132"/>
    </location>
</feature>
<gene>
    <name evidence="1" type="primary">rnpA</name>
</gene>
<dbReference type="EC" id="3.1.26.5" evidence="1"/>
<dbReference type="EMBL" id="M34006">
    <property type="protein sequence ID" value="AAA25313.1"/>
    <property type="molecule type" value="Genomic_DNA"/>
</dbReference>
<dbReference type="PIR" id="JQ0737">
    <property type="entry name" value="JQ0737"/>
</dbReference>
<dbReference type="RefSeq" id="WP_010079776.1">
    <property type="nucleotide sequence ID" value="NZ_QVMY01000063.1"/>
</dbReference>
<dbReference type="SMR" id="P21172"/>
<dbReference type="STRING" id="1232675.GCA_000309825_00375"/>
<dbReference type="GeneID" id="93344188"/>
<dbReference type="PATRIC" id="fig|1270.31.peg.2364"/>
<dbReference type="OMA" id="MLPAQHK"/>
<dbReference type="GO" id="GO:0030677">
    <property type="term" value="C:ribonuclease P complex"/>
    <property type="evidence" value="ECO:0007669"/>
    <property type="project" value="TreeGrafter"/>
</dbReference>
<dbReference type="GO" id="GO:0042781">
    <property type="term" value="F:3'-tRNA processing endoribonuclease activity"/>
    <property type="evidence" value="ECO:0007669"/>
    <property type="project" value="TreeGrafter"/>
</dbReference>
<dbReference type="GO" id="GO:0004526">
    <property type="term" value="F:ribonuclease P activity"/>
    <property type="evidence" value="ECO:0007669"/>
    <property type="project" value="UniProtKB-UniRule"/>
</dbReference>
<dbReference type="GO" id="GO:0000049">
    <property type="term" value="F:tRNA binding"/>
    <property type="evidence" value="ECO:0007669"/>
    <property type="project" value="UniProtKB-UniRule"/>
</dbReference>
<dbReference type="GO" id="GO:0001682">
    <property type="term" value="P:tRNA 5'-leader removal"/>
    <property type="evidence" value="ECO:0007669"/>
    <property type="project" value="UniProtKB-UniRule"/>
</dbReference>
<dbReference type="Gene3D" id="3.30.230.10">
    <property type="match status" value="1"/>
</dbReference>
<dbReference type="HAMAP" id="MF_00227">
    <property type="entry name" value="RNase_P"/>
    <property type="match status" value="1"/>
</dbReference>
<dbReference type="InterPro" id="IPR020568">
    <property type="entry name" value="Ribosomal_Su5_D2-typ_SF"/>
</dbReference>
<dbReference type="InterPro" id="IPR014721">
    <property type="entry name" value="Ribsml_uS5_D2-typ_fold_subgr"/>
</dbReference>
<dbReference type="InterPro" id="IPR000100">
    <property type="entry name" value="RNase_P"/>
</dbReference>
<dbReference type="InterPro" id="IPR020539">
    <property type="entry name" value="RNase_P_CS"/>
</dbReference>
<dbReference type="NCBIfam" id="TIGR00188">
    <property type="entry name" value="rnpA"/>
    <property type="match status" value="1"/>
</dbReference>
<dbReference type="PANTHER" id="PTHR33992">
    <property type="entry name" value="RIBONUCLEASE P PROTEIN COMPONENT"/>
    <property type="match status" value="1"/>
</dbReference>
<dbReference type="PANTHER" id="PTHR33992:SF1">
    <property type="entry name" value="RIBONUCLEASE P PROTEIN COMPONENT"/>
    <property type="match status" value="1"/>
</dbReference>
<dbReference type="Pfam" id="PF00825">
    <property type="entry name" value="Ribonuclease_P"/>
    <property type="match status" value="1"/>
</dbReference>
<dbReference type="SUPFAM" id="SSF54211">
    <property type="entry name" value="Ribosomal protein S5 domain 2-like"/>
    <property type="match status" value="1"/>
</dbReference>
<dbReference type="PROSITE" id="PS00648">
    <property type="entry name" value="RIBONUCLEASE_P"/>
    <property type="match status" value="1"/>
</dbReference>
<protein>
    <recommendedName>
        <fullName evidence="1">Ribonuclease P protein component</fullName>
        <shortName evidence="1">RNase P protein</shortName>
        <shortName evidence="1">RNaseP protein</shortName>
        <ecNumber evidence="1">3.1.26.5</ecNumber>
    </recommendedName>
    <alternativeName>
        <fullName evidence="1">Protein C5</fullName>
    </alternativeName>
</protein>
<reference key="1">
    <citation type="journal article" date="1990" name="Gene">
        <title>Structure of the dnaA region of Micrococcus luteus: conservation and variations among eubacteria.</title>
        <authorList>
            <person name="Fujita M.Q."/>
            <person name="Yoshikawa H."/>
            <person name="Ogasawara N."/>
        </authorList>
    </citation>
    <scope>NUCLEOTIDE SEQUENCE [GENOMIC DNA]</scope>
</reference>
<name>RNPA_MICLU</name>
<accession>P21172</accession>
<comment type="function">
    <text evidence="1">RNaseP catalyzes the removal of the 5'-leader sequence from pre-tRNA to produce the mature 5'-terminus. It can also cleave other RNA substrates such as 4.5S RNA. The protein component plays an auxiliary but essential role in vivo by binding to the 5'-leader sequence and broadening the substrate specificity of the ribozyme.</text>
</comment>
<comment type="catalytic activity">
    <reaction evidence="1">
        <text>Endonucleolytic cleavage of RNA, removing 5'-extranucleotides from tRNA precursor.</text>
        <dbReference type="EC" id="3.1.26.5"/>
    </reaction>
</comment>
<comment type="subunit">
    <text evidence="1">Consists of a catalytic RNA component (M1 or rnpB) and a protein subunit.</text>
</comment>
<comment type="similarity">
    <text evidence="1">Belongs to the RnpA family.</text>
</comment>